<accession>C0Q7Z4</accession>
<feature type="chain" id="PRO_1000196206" description="Large ribosomal subunit protein bL36">
    <location>
        <begin position="1"/>
        <end position="46"/>
    </location>
</feature>
<keyword id="KW-0687">Ribonucleoprotein</keyword>
<keyword id="KW-0689">Ribosomal protein</keyword>
<name>RL36_SALPC</name>
<dbReference type="EMBL" id="CP000857">
    <property type="protein sequence ID" value="ACN44664.1"/>
    <property type="molecule type" value="Genomic_DNA"/>
</dbReference>
<dbReference type="SMR" id="C0Q7Z4"/>
<dbReference type="KEGG" id="sei:SPC_0484"/>
<dbReference type="HOGENOM" id="CLU_135723_3_1_6"/>
<dbReference type="Proteomes" id="UP000001599">
    <property type="component" value="Chromosome"/>
</dbReference>
<dbReference type="GO" id="GO:1990904">
    <property type="term" value="C:ribonucleoprotein complex"/>
    <property type="evidence" value="ECO:0007669"/>
    <property type="project" value="UniProtKB-KW"/>
</dbReference>
<dbReference type="GO" id="GO:0005840">
    <property type="term" value="C:ribosome"/>
    <property type="evidence" value="ECO:0007669"/>
    <property type="project" value="UniProtKB-KW"/>
</dbReference>
<dbReference type="GO" id="GO:0003735">
    <property type="term" value="F:structural constituent of ribosome"/>
    <property type="evidence" value="ECO:0007669"/>
    <property type="project" value="InterPro"/>
</dbReference>
<dbReference type="GO" id="GO:0006412">
    <property type="term" value="P:translation"/>
    <property type="evidence" value="ECO:0007669"/>
    <property type="project" value="UniProtKB-UniRule"/>
</dbReference>
<dbReference type="HAMAP" id="MF_00251">
    <property type="entry name" value="Ribosomal_bL36"/>
    <property type="match status" value="1"/>
</dbReference>
<dbReference type="InterPro" id="IPR000473">
    <property type="entry name" value="Ribosomal_bL36"/>
</dbReference>
<dbReference type="InterPro" id="IPR035977">
    <property type="entry name" value="Ribosomal_bL36_sp"/>
</dbReference>
<dbReference type="InterPro" id="IPR047621">
    <property type="entry name" value="Ribosomal_L36_bact"/>
</dbReference>
<dbReference type="NCBIfam" id="NF002021">
    <property type="entry name" value="PRK00831.1"/>
    <property type="match status" value="1"/>
</dbReference>
<dbReference type="NCBIfam" id="TIGR01022">
    <property type="entry name" value="rpmJ_bact"/>
    <property type="match status" value="1"/>
</dbReference>
<dbReference type="PANTHER" id="PTHR47781">
    <property type="entry name" value="50S RIBOSOMAL PROTEIN L36 2"/>
    <property type="match status" value="1"/>
</dbReference>
<dbReference type="PANTHER" id="PTHR47781:SF1">
    <property type="entry name" value="LARGE RIBOSOMAL SUBUNIT PROTEIN BL36B"/>
    <property type="match status" value="1"/>
</dbReference>
<dbReference type="Pfam" id="PF00444">
    <property type="entry name" value="Ribosomal_L36"/>
    <property type="match status" value="1"/>
</dbReference>
<dbReference type="SUPFAM" id="SSF57840">
    <property type="entry name" value="Ribosomal protein L36"/>
    <property type="match status" value="1"/>
</dbReference>
<dbReference type="PROSITE" id="PS00828">
    <property type="entry name" value="RIBOSOMAL_L36"/>
    <property type="match status" value="1"/>
</dbReference>
<gene>
    <name evidence="1" type="primary">rpmJ</name>
    <name type="ordered locus">SPC_0484</name>
</gene>
<reference key="1">
    <citation type="journal article" date="2009" name="PLoS ONE">
        <title>Salmonella paratyphi C: genetic divergence from Salmonella choleraesuis and pathogenic convergence with Salmonella typhi.</title>
        <authorList>
            <person name="Liu W.-Q."/>
            <person name="Feng Y."/>
            <person name="Wang Y."/>
            <person name="Zou Q.-H."/>
            <person name="Chen F."/>
            <person name="Guo J.-T."/>
            <person name="Peng Y.-H."/>
            <person name="Jin Y."/>
            <person name="Li Y.-G."/>
            <person name="Hu S.-N."/>
            <person name="Johnston R.N."/>
            <person name="Liu G.-R."/>
            <person name="Liu S.-L."/>
        </authorList>
    </citation>
    <scope>NUCLEOTIDE SEQUENCE [LARGE SCALE GENOMIC DNA]</scope>
    <source>
        <strain>RKS4594</strain>
    </source>
</reference>
<organism>
    <name type="scientific">Salmonella paratyphi C (strain RKS4594)</name>
    <dbReference type="NCBI Taxonomy" id="476213"/>
    <lineage>
        <taxon>Bacteria</taxon>
        <taxon>Pseudomonadati</taxon>
        <taxon>Pseudomonadota</taxon>
        <taxon>Gammaproteobacteria</taxon>
        <taxon>Enterobacterales</taxon>
        <taxon>Enterobacteriaceae</taxon>
        <taxon>Salmonella</taxon>
    </lineage>
</organism>
<sequence length="46" mass="5521">MQVLNSLRNAKQRHPDCQIVKRKGRLYVICKTNPRFKAVQGRKKRR</sequence>
<evidence type="ECO:0000255" key="1">
    <source>
        <dbReference type="HAMAP-Rule" id="MF_00251"/>
    </source>
</evidence>
<evidence type="ECO:0000305" key="2"/>
<proteinExistence type="inferred from homology"/>
<protein>
    <recommendedName>
        <fullName evidence="1">Large ribosomal subunit protein bL36</fullName>
    </recommendedName>
    <alternativeName>
        <fullName evidence="2">50S ribosomal protein L36</fullName>
    </alternativeName>
</protein>
<comment type="similarity">
    <text evidence="1">Belongs to the bacterial ribosomal protein bL36 family.</text>
</comment>